<protein>
    <recommendedName>
        <fullName evidence="1">Small ribosomal subunit protein uS13</fullName>
    </recommendedName>
    <alternativeName>
        <fullName evidence="3">30S ribosomal protein S13</fullName>
    </alternativeName>
</protein>
<sequence length="121" mass="13661">MARISGVEIPNNKRVVVSLTYIYGIGLPTAQSVLKTLNISEDIRVKDLTEEQIKNISIEISKYKTEGELRREVSLNIKRLMEIGSYRGLRHRKGLPVRGQSSKTNARTVKGPRKTVANKKK</sequence>
<organism>
    <name type="scientific">Mycoplasma capricolum subsp. capricolum (strain California kid / ATCC 27343 / NCTC 10154)</name>
    <dbReference type="NCBI Taxonomy" id="340047"/>
    <lineage>
        <taxon>Bacteria</taxon>
        <taxon>Bacillati</taxon>
        <taxon>Mycoplasmatota</taxon>
        <taxon>Mollicutes</taxon>
        <taxon>Mycoplasmataceae</taxon>
        <taxon>Mycoplasma</taxon>
    </lineage>
</organism>
<dbReference type="EMBL" id="CP000123">
    <property type="protein sequence ID" value="ABC01343.1"/>
    <property type="molecule type" value="Genomic_DNA"/>
</dbReference>
<dbReference type="RefSeq" id="WP_011387529.1">
    <property type="nucleotide sequence ID" value="NC_007633.1"/>
</dbReference>
<dbReference type="SMR" id="Q2SRH7"/>
<dbReference type="GeneID" id="23778373"/>
<dbReference type="KEGG" id="mcp:MCAP_0672"/>
<dbReference type="HOGENOM" id="CLU_103849_1_2_14"/>
<dbReference type="PhylomeDB" id="Q2SRH7"/>
<dbReference type="Proteomes" id="UP000001928">
    <property type="component" value="Chromosome"/>
</dbReference>
<dbReference type="GO" id="GO:0005829">
    <property type="term" value="C:cytosol"/>
    <property type="evidence" value="ECO:0007669"/>
    <property type="project" value="TreeGrafter"/>
</dbReference>
<dbReference type="GO" id="GO:0015935">
    <property type="term" value="C:small ribosomal subunit"/>
    <property type="evidence" value="ECO:0007669"/>
    <property type="project" value="TreeGrafter"/>
</dbReference>
<dbReference type="GO" id="GO:0019843">
    <property type="term" value="F:rRNA binding"/>
    <property type="evidence" value="ECO:0007669"/>
    <property type="project" value="UniProtKB-UniRule"/>
</dbReference>
<dbReference type="GO" id="GO:0003735">
    <property type="term" value="F:structural constituent of ribosome"/>
    <property type="evidence" value="ECO:0007669"/>
    <property type="project" value="InterPro"/>
</dbReference>
<dbReference type="GO" id="GO:0000049">
    <property type="term" value="F:tRNA binding"/>
    <property type="evidence" value="ECO:0007669"/>
    <property type="project" value="UniProtKB-UniRule"/>
</dbReference>
<dbReference type="GO" id="GO:0006412">
    <property type="term" value="P:translation"/>
    <property type="evidence" value="ECO:0007669"/>
    <property type="project" value="UniProtKB-UniRule"/>
</dbReference>
<dbReference type="FunFam" id="1.10.8.50:FF:000001">
    <property type="entry name" value="30S ribosomal protein S13"/>
    <property type="match status" value="1"/>
</dbReference>
<dbReference type="FunFam" id="4.10.910.10:FF:000001">
    <property type="entry name" value="30S ribosomal protein S13"/>
    <property type="match status" value="1"/>
</dbReference>
<dbReference type="Gene3D" id="1.10.8.50">
    <property type="match status" value="1"/>
</dbReference>
<dbReference type="Gene3D" id="4.10.910.10">
    <property type="entry name" value="30s ribosomal protein s13, domain 2"/>
    <property type="match status" value="1"/>
</dbReference>
<dbReference type="HAMAP" id="MF_01315">
    <property type="entry name" value="Ribosomal_uS13"/>
    <property type="match status" value="1"/>
</dbReference>
<dbReference type="InterPro" id="IPR027437">
    <property type="entry name" value="Rbsml_uS13_C"/>
</dbReference>
<dbReference type="InterPro" id="IPR001892">
    <property type="entry name" value="Ribosomal_uS13"/>
</dbReference>
<dbReference type="InterPro" id="IPR010979">
    <property type="entry name" value="Ribosomal_uS13-like_H2TH"/>
</dbReference>
<dbReference type="InterPro" id="IPR019980">
    <property type="entry name" value="Ribosomal_uS13_bac-type"/>
</dbReference>
<dbReference type="InterPro" id="IPR018269">
    <property type="entry name" value="Ribosomal_uS13_CS"/>
</dbReference>
<dbReference type="NCBIfam" id="TIGR03631">
    <property type="entry name" value="uS13_bact"/>
    <property type="match status" value="1"/>
</dbReference>
<dbReference type="PANTHER" id="PTHR10871">
    <property type="entry name" value="30S RIBOSOMAL PROTEIN S13/40S RIBOSOMAL PROTEIN S18"/>
    <property type="match status" value="1"/>
</dbReference>
<dbReference type="PANTHER" id="PTHR10871:SF1">
    <property type="entry name" value="SMALL RIBOSOMAL SUBUNIT PROTEIN US13M"/>
    <property type="match status" value="1"/>
</dbReference>
<dbReference type="Pfam" id="PF00416">
    <property type="entry name" value="Ribosomal_S13"/>
    <property type="match status" value="1"/>
</dbReference>
<dbReference type="PIRSF" id="PIRSF002134">
    <property type="entry name" value="Ribosomal_S13"/>
    <property type="match status" value="1"/>
</dbReference>
<dbReference type="SUPFAM" id="SSF46946">
    <property type="entry name" value="S13-like H2TH domain"/>
    <property type="match status" value="1"/>
</dbReference>
<dbReference type="PROSITE" id="PS00646">
    <property type="entry name" value="RIBOSOMAL_S13_1"/>
    <property type="match status" value="1"/>
</dbReference>
<dbReference type="PROSITE" id="PS50159">
    <property type="entry name" value="RIBOSOMAL_S13_2"/>
    <property type="match status" value="1"/>
</dbReference>
<feature type="chain" id="PRO_0000230527" description="Small ribosomal subunit protein uS13">
    <location>
        <begin position="1"/>
        <end position="121"/>
    </location>
</feature>
<feature type="region of interest" description="Disordered" evidence="2">
    <location>
        <begin position="92"/>
        <end position="121"/>
    </location>
</feature>
<feature type="compositionally biased region" description="Basic residues" evidence="2">
    <location>
        <begin position="110"/>
        <end position="121"/>
    </location>
</feature>
<keyword id="KW-0687">Ribonucleoprotein</keyword>
<keyword id="KW-0689">Ribosomal protein</keyword>
<keyword id="KW-0694">RNA-binding</keyword>
<keyword id="KW-0699">rRNA-binding</keyword>
<keyword id="KW-0820">tRNA-binding</keyword>
<name>RS13_MYCCT</name>
<comment type="function">
    <text evidence="1">Located at the top of the head of the 30S subunit, it contacts several helices of the 16S rRNA. In the 70S ribosome it contacts the 23S rRNA (bridge B1a) and protein L5 of the 50S subunit (bridge B1b), connecting the 2 subunits; these bridges are implicated in subunit movement. Contacts the tRNAs in the A and P-sites.</text>
</comment>
<comment type="subunit">
    <text evidence="1">Part of the 30S ribosomal subunit. Forms a loose heterodimer with protein S19. Forms two bridges to the 50S subunit in the 70S ribosome.</text>
</comment>
<comment type="similarity">
    <text evidence="1">Belongs to the universal ribosomal protein uS13 family.</text>
</comment>
<reference key="1">
    <citation type="submission" date="2005-09" db="EMBL/GenBank/DDBJ databases">
        <authorList>
            <person name="Glass J.I."/>
            <person name="Lartigue C."/>
            <person name="Pfannkoch C."/>
            <person name="Baden-Tillson H."/>
            <person name="Smith H.O."/>
            <person name="Venter J.C."/>
            <person name="Roske K."/>
            <person name="Wise K.S."/>
            <person name="Calcutt M.J."/>
            <person name="Nelson W.C."/>
            <person name="Nierman W.C."/>
        </authorList>
    </citation>
    <scope>NUCLEOTIDE SEQUENCE [LARGE SCALE GENOMIC DNA]</scope>
    <source>
        <strain>California kid / ATCC 27343 / NCTC 10154</strain>
    </source>
</reference>
<proteinExistence type="inferred from homology"/>
<evidence type="ECO:0000255" key="1">
    <source>
        <dbReference type="HAMAP-Rule" id="MF_01315"/>
    </source>
</evidence>
<evidence type="ECO:0000256" key="2">
    <source>
        <dbReference type="SAM" id="MobiDB-lite"/>
    </source>
</evidence>
<evidence type="ECO:0000305" key="3"/>
<accession>Q2SRH7</accession>
<gene>
    <name evidence="1" type="primary">rpsM</name>
    <name type="ordered locus">MCAP_0672</name>
</gene>